<name>RLMI_PHOPR</name>
<feature type="chain" id="PRO_0000366236" description="Ribosomal RNA large subunit methyltransferase I">
    <location>
        <begin position="1"/>
        <end position="397"/>
    </location>
</feature>
<feature type="domain" description="PUA" evidence="1">
    <location>
        <begin position="2"/>
        <end position="82"/>
    </location>
</feature>
<protein>
    <recommendedName>
        <fullName evidence="1">Ribosomal RNA large subunit methyltransferase I</fullName>
        <ecNumber evidence="1">2.1.1.191</ecNumber>
    </recommendedName>
    <alternativeName>
        <fullName evidence="1">23S rRNA m5C1962 methyltransferase</fullName>
    </alternativeName>
    <alternativeName>
        <fullName evidence="1">rRNA (cytosine-C(5)-)-methyltransferase RlmI</fullName>
    </alternativeName>
</protein>
<keyword id="KW-0963">Cytoplasm</keyword>
<keyword id="KW-0489">Methyltransferase</keyword>
<keyword id="KW-1185">Reference proteome</keyword>
<keyword id="KW-0694">RNA-binding</keyword>
<keyword id="KW-0698">rRNA processing</keyword>
<keyword id="KW-0949">S-adenosyl-L-methionine</keyword>
<keyword id="KW-0808">Transferase</keyword>
<accession>Q6LQ36</accession>
<sequence length="397" mass="44304">MTTSIYLVKGREKSLRRRHPWVFSRGIDRIEGNKPSMGETVEVYDNKGEWLARGAYSPQSQIRIRVWTFDKKEVINVDFFVKRLKAAQALRDVLAARDGLTGYRLIAAESDGLPGITIDRYQNFLVCQLLSAGAEEQKDALVEALNICYPECSVYERSDVAVRKKEGLKQRTGVLSGEEPPKFVTIEENGIKINVDIVGGHKTGFYLDQRDSRQAAVKYVNGKRVLNCFCYTGGFGLYALKGGASQVVNVDVSQPALDTARLNTEANGLPVENAEFVNADVFKLLREYRERGEFFDVVIMDPPKFAESKSQLVGACRGYKDINMLAMQILNPGGILLTYSCSGLMDNGLFQKIVADAALDAHREVQFIERFGQAADHPLDSAYPEGFYLKGFACYVK</sequence>
<organism>
    <name type="scientific">Photobacterium profundum (strain SS9)</name>
    <dbReference type="NCBI Taxonomy" id="298386"/>
    <lineage>
        <taxon>Bacteria</taxon>
        <taxon>Pseudomonadati</taxon>
        <taxon>Pseudomonadota</taxon>
        <taxon>Gammaproteobacteria</taxon>
        <taxon>Vibrionales</taxon>
        <taxon>Vibrionaceae</taxon>
        <taxon>Photobacterium</taxon>
    </lineage>
</organism>
<evidence type="ECO:0000255" key="1">
    <source>
        <dbReference type="HAMAP-Rule" id="MF_01857"/>
    </source>
</evidence>
<evidence type="ECO:0000305" key="2"/>
<gene>
    <name evidence="1" type="primary">rlmI</name>
    <name type="ordered locus">PBPRA2194</name>
</gene>
<dbReference type="EC" id="2.1.1.191" evidence="1"/>
<dbReference type="EMBL" id="CR378670">
    <property type="protein sequence ID" value="CAG20590.1"/>
    <property type="status" value="ALT_INIT"/>
    <property type="molecule type" value="Genomic_DNA"/>
</dbReference>
<dbReference type="RefSeq" id="WP_041394360.1">
    <property type="nucleotide sequence ID" value="NC_006370.1"/>
</dbReference>
<dbReference type="SMR" id="Q6LQ36"/>
<dbReference type="STRING" id="298386.PBPRA2194"/>
<dbReference type="KEGG" id="ppr:PBPRA2194"/>
<dbReference type="eggNOG" id="COG1092">
    <property type="taxonomic scope" value="Bacteria"/>
</dbReference>
<dbReference type="HOGENOM" id="CLU_014042_0_0_6"/>
<dbReference type="Proteomes" id="UP000000593">
    <property type="component" value="Chromosome 1"/>
</dbReference>
<dbReference type="GO" id="GO:0005737">
    <property type="term" value="C:cytoplasm"/>
    <property type="evidence" value="ECO:0007669"/>
    <property type="project" value="UniProtKB-SubCell"/>
</dbReference>
<dbReference type="GO" id="GO:0003723">
    <property type="term" value="F:RNA binding"/>
    <property type="evidence" value="ECO:0007669"/>
    <property type="project" value="UniProtKB-KW"/>
</dbReference>
<dbReference type="GO" id="GO:0016434">
    <property type="term" value="F:rRNA (cytosine) methyltransferase activity"/>
    <property type="evidence" value="ECO:0007669"/>
    <property type="project" value="UniProtKB-UniRule"/>
</dbReference>
<dbReference type="CDD" id="cd02440">
    <property type="entry name" value="AdoMet_MTases"/>
    <property type="match status" value="1"/>
</dbReference>
<dbReference type="CDD" id="cd21153">
    <property type="entry name" value="PUA_RlmI"/>
    <property type="match status" value="1"/>
</dbReference>
<dbReference type="CDD" id="cd11572">
    <property type="entry name" value="RlmI_M_like"/>
    <property type="match status" value="1"/>
</dbReference>
<dbReference type="Gene3D" id="2.30.130.10">
    <property type="entry name" value="PUA domain"/>
    <property type="match status" value="1"/>
</dbReference>
<dbReference type="Gene3D" id="3.30.750.80">
    <property type="entry name" value="RNA methyltransferase domain (HRMD) like"/>
    <property type="match status" value="1"/>
</dbReference>
<dbReference type="Gene3D" id="3.40.50.150">
    <property type="entry name" value="Vaccinia Virus protein VP39"/>
    <property type="match status" value="1"/>
</dbReference>
<dbReference type="HAMAP" id="MF_01857">
    <property type="entry name" value="23SrRNA_methyltr_I"/>
    <property type="match status" value="1"/>
</dbReference>
<dbReference type="InterPro" id="IPR002478">
    <property type="entry name" value="PUA"/>
</dbReference>
<dbReference type="InterPro" id="IPR015947">
    <property type="entry name" value="PUA-like_sf"/>
</dbReference>
<dbReference type="InterPro" id="IPR036974">
    <property type="entry name" value="PUA_sf"/>
</dbReference>
<dbReference type="InterPro" id="IPR023542">
    <property type="entry name" value="RLMI"/>
</dbReference>
<dbReference type="InterPro" id="IPR041532">
    <property type="entry name" value="RlmI-like_PUA"/>
</dbReference>
<dbReference type="InterPro" id="IPR019614">
    <property type="entry name" value="SAM-dep_methyl-trfase"/>
</dbReference>
<dbReference type="InterPro" id="IPR029063">
    <property type="entry name" value="SAM-dependent_MTases_sf"/>
</dbReference>
<dbReference type="PANTHER" id="PTHR42873">
    <property type="entry name" value="RIBOSOMAL RNA LARGE SUBUNIT METHYLTRANSFERASE"/>
    <property type="match status" value="1"/>
</dbReference>
<dbReference type="PANTHER" id="PTHR42873:SF1">
    <property type="entry name" value="S-ADENOSYLMETHIONINE-DEPENDENT METHYLTRANSFERASE DOMAIN-CONTAINING PROTEIN"/>
    <property type="match status" value="1"/>
</dbReference>
<dbReference type="Pfam" id="PF10672">
    <property type="entry name" value="Methyltrans_SAM"/>
    <property type="match status" value="1"/>
</dbReference>
<dbReference type="Pfam" id="PF17785">
    <property type="entry name" value="PUA_3"/>
    <property type="match status" value="1"/>
</dbReference>
<dbReference type="SMART" id="SM00359">
    <property type="entry name" value="PUA"/>
    <property type="match status" value="1"/>
</dbReference>
<dbReference type="SUPFAM" id="SSF88697">
    <property type="entry name" value="PUA domain-like"/>
    <property type="match status" value="1"/>
</dbReference>
<dbReference type="SUPFAM" id="SSF53335">
    <property type="entry name" value="S-adenosyl-L-methionine-dependent methyltransferases"/>
    <property type="match status" value="1"/>
</dbReference>
<dbReference type="PROSITE" id="PS50890">
    <property type="entry name" value="PUA"/>
    <property type="match status" value="1"/>
</dbReference>
<reference key="1">
    <citation type="journal article" date="2005" name="Science">
        <title>Life at depth: Photobacterium profundum genome sequence and expression analysis.</title>
        <authorList>
            <person name="Vezzi A."/>
            <person name="Campanaro S."/>
            <person name="D'Angelo M."/>
            <person name="Simonato F."/>
            <person name="Vitulo N."/>
            <person name="Lauro F.M."/>
            <person name="Cestaro A."/>
            <person name="Malacrida G."/>
            <person name="Simionati B."/>
            <person name="Cannata N."/>
            <person name="Romualdi C."/>
            <person name="Bartlett D.H."/>
            <person name="Valle G."/>
        </authorList>
    </citation>
    <scope>NUCLEOTIDE SEQUENCE [LARGE SCALE GENOMIC DNA]</scope>
    <source>
        <strain>ATCC BAA-1253 / SS9</strain>
    </source>
</reference>
<proteinExistence type="inferred from homology"/>
<comment type="function">
    <text evidence="1">Specifically methylates the cytosine at position 1962 (m5C1962) of 23S rRNA.</text>
</comment>
<comment type="catalytic activity">
    <reaction evidence="1">
        <text>cytidine(1962) in 23S rRNA + S-adenosyl-L-methionine = 5-methylcytidine(1962) in 23S rRNA + S-adenosyl-L-homocysteine + H(+)</text>
        <dbReference type="Rhea" id="RHEA:42912"/>
        <dbReference type="Rhea" id="RHEA-COMP:10382"/>
        <dbReference type="Rhea" id="RHEA-COMP:10386"/>
        <dbReference type="ChEBI" id="CHEBI:15378"/>
        <dbReference type="ChEBI" id="CHEBI:57856"/>
        <dbReference type="ChEBI" id="CHEBI:59789"/>
        <dbReference type="ChEBI" id="CHEBI:74483"/>
        <dbReference type="ChEBI" id="CHEBI:82748"/>
        <dbReference type="EC" id="2.1.1.191"/>
    </reaction>
</comment>
<comment type="subcellular location">
    <subcellularLocation>
        <location evidence="1">Cytoplasm</location>
    </subcellularLocation>
</comment>
<comment type="similarity">
    <text evidence="1">Belongs to the methyltransferase superfamily. RlmI family.</text>
</comment>
<comment type="sequence caution" evidence="2">
    <conflict type="erroneous initiation">
        <sequence resource="EMBL-CDS" id="CAG20590"/>
    </conflict>
</comment>